<proteinExistence type="inferred from homology"/>
<reference key="1">
    <citation type="submission" date="2007-11" db="EMBL/GenBank/DDBJ databases">
        <authorList>
            <consortium name="The Salmonella enterica serovar Paratyphi B Genome Sequencing Project"/>
            <person name="McClelland M."/>
            <person name="Sanderson E.K."/>
            <person name="Porwollik S."/>
            <person name="Spieth J."/>
            <person name="Clifton W.S."/>
            <person name="Fulton R."/>
            <person name="Cordes M."/>
            <person name="Wollam A."/>
            <person name="Shah N."/>
            <person name="Pepin K."/>
            <person name="Bhonagiri V."/>
            <person name="Nash W."/>
            <person name="Johnson M."/>
            <person name="Thiruvilangam P."/>
            <person name="Wilson R."/>
        </authorList>
    </citation>
    <scope>NUCLEOTIDE SEQUENCE [LARGE SCALE GENOMIC DNA]</scope>
    <source>
        <strain>ATCC BAA-1250 / SPB7</strain>
    </source>
</reference>
<keyword id="KW-0997">Cell inner membrane</keyword>
<keyword id="KW-1003">Cell membrane</keyword>
<keyword id="KW-0406">Ion transport</keyword>
<keyword id="KW-0472">Membrane</keyword>
<keyword id="KW-0630">Potassium</keyword>
<keyword id="KW-0633">Potassium transport</keyword>
<keyword id="KW-0812">Transmembrane</keyword>
<keyword id="KW-1133">Transmembrane helix</keyword>
<keyword id="KW-0813">Transport</keyword>
<name>KDPA_SALPB</name>
<evidence type="ECO:0000255" key="1">
    <source>
        <dbReference type="HAMAP-Rule" id="MF_00275"/>
    </source>
</evidence>
<gene>
    <name evidence="1" type="primary">kdpA</name>
    <name type="ordered locus">SPAB_02830</name>
</gene>
<dbReference type="EMBL" id="CP000886">
    <property type="protein sequence ID" value="ABX68202.1"/>
    <property type="molecule type" value="Genomic_DNA"/>
</dbReference>
<dbReference type="RefSeq" id="WP_000730078.1">
    <property type="nucleotide sequence ID" value="NC_010102.1"/>
</dbReference>
<dbReference type="SMR" id="A9MUD9"/>
<dbReference type="KEGG" id="spq:SPAB_02830"/>
<dbReference type="PATRIC" id="fig|1016998.12.peg.2675"/>
<dbReference type="HOGENOM" id="CLU_018614_3_0_6"/>
<dbReference type="BioCyc" id="SENT1016998:SPAB_RS11525-MONOMER"/>
<dbReference type="Proteomes" id="UP000008556">
    <property type="component" value="Chromosome"/>
</dbReference>
<dbReference type="GO" id="GO:0005886">
    <property type="term" value="C:plasma membrane"/>
    <property type="evidence" value="ECO:0007669"/>
    <property type="project" value="UniProtKB-SubCell"/>
</dbReference>
<dbReference type="GO" id="GO:0008556">
    <property type="term" value="F:P-type potassium transmembrane transporter activity"/>
    <property type="evidence" value="ECO:0007669"/>
    <property type="project" value="InterPro"/>
</dbReference>
<dbReference type="GO" id="GO:0030955">
    <property type="term" value="F:potassium ion binding"/>
    <property type="evidence" value="ECO:0007669"/>
    <property type="project" value="UniProtKB-UniRule"/>
</dbReference>
<dbReference type="HAMAP" id="MF_00275">
    <property type="entry name" value="KdpA"/>
    <property type="match status" value="1"/>
</dbReference>
<dbReference type="InterPro" id="IPR004623">
    <property type="entry name" value="KdpA"/>
</dbReference>
<dbReference type="NCBIfam" id="TIGR00680">
    <property type="entry name" value="kdpA"/>
    <property type="match status" value="1"/>
</dbReference>
<dbReference type="PANTHER" id="PTHR30607">
    <property type="entry name" value="POTASSIUM-TRANSPORTING ATPASE A CHAIN"/>
    <property type="match status" value="1"/>
</dbReference>
<dbReference type="PANTHER" id="PTHR30607:SF2">
    <property type="entry name" value="POTASSIUM-TRANSPORTING ATPASE POTASSIUM-BINDING SUBUNIT"/>
    <property type="match status" value="1"/>
</dbReference>
<dbReference type="Pfam" id="PF03814">
    <property type="entry name" value="KdpA"/>
    <property type="match status" value="1"/>
</dbReference>
<dbReference type="PIRSF" id="PIRSF001294">
    <property type="entry name" value="K_ATPaseA"/>
    <property type="match status" value="1"/>
</dbReference>
<comment type="function">
    <text evidence="1">Part of the high-affinity ATP-driven potassium transport (or Kdp) system, which catalyzes the hydrolysis of ATP coupled with the electrogenic transport of potassium into the cytoplasm. This subunit binds the periplasmic potassium ions and delivers the ions to the membrane domain of KdpB through an intramembrane tunnel.</text>
</comment>
<comment type="subunit">
    <text evidence="1">The system is composed of three essential subunits: KdpA, KdpB and KdpC.</text>
</comment>
<comment type="subcellular location">
    <subcellularLocation>
        <location evidence="1">Cell inner membrane</location>
        <topology evidence="1">Multi-pass membrane protein</topology>
    </subcellularLocation>
</comment>
<comment type="similarity">
    <text evidence="1">Belongs to the KdpA family.</text>
</comment>
<organism>
    <name type="scientific">Salmonella paratyphi B (strain ATCC BAA-1250 / SPB7)</name>
    <dbReference type="NCBI Taxonomy" id="1016998"/>
    <lineage>
        <taxon>Bacteria</taxon>
        <taxon>Pseudomonadati</taxon>
        <taxon>Pseudomonadota</taxon>
        <taxon>Gammaproteobacteria</taxon>
        <taxon>Enterobacterales</taxon>
        <taxon>Enterobacteriaceae</taxon>
        <taxon>Salmonella</taxon>
    </lineage>
</organism>
<feature type="chain" id="PRO_1000078788" description="Potassium-transporting ATPase potassium-binding subunit">
    <location>
        <begin position="1"/>
        <end position="559"/>
    </location>
</feature>
<feature type="transmembrane region" description="Helical" evidence="1">
    <location>
        <begin position="5"/>
        <end position="25"/>
    </location>
</feature>
<feature type="transmembrane region" description="Helical" evidence="1">
    <location>
        <begin position="27"/>
        <end position="47"/>
    </location>
</feature>
<feature type="transmembrane region" description="Helical" evidence="1">
    <location>
        <begin position="63"/>
        <end position="83"/>
    </location>
</feature>
<feature type="transmembrane region" description="Helical" evidence="1">
    <location>
        <begin position="132"/>
        <end position="152"/>
    </location>
</feature>
<feature type="transmembrane region" description="Helical" evidence="1">
    <location>
        <begin position="170"/>
        <end position="190"/>
    </location>
</feature>
<feature type="transmembrane region" description="Helical" evidence="1">
    <location>
        <begin position="253"/>
        <end position="273"/>
    </location>
</feature>
<feature type="transmembrane region" description="Helical" evidence="1">
    <location>
        <begin position="283"/>
        <end position="303"/>
    </location>
</feature>
<feature type="transmembrane region" description="Helical" evidence="1">
    <location>
        <begin position="327"/>
        <end position="347"/>
    </location>
</feature>
<feature type="transmembrane region" description="Helical" evidence="1">
    <location>
        <begin position="356"/>
        <end position="376"/>
    </location>
</feature>
<feature type="transmembrane region" description="Helical" evidence="1">
    <location>
        <begin position="379"/>
        <end position="399"/>
    </location>
</feature>
<feature type="transmembrane region" description="Helical" evidence="1">
    <location>
        <begin position="416"/>
        <end position="436"/>
    </location>
</feature>
<feature type="transmembrane region" description="Helical" evidence="1">
    <location>
        <begin position="484"/>
        <end position="504"/>
    </location>
</feature>
<feature type="transmembrane region" description="Helical" evidence="1">
    <location>
        <begin position="524"/>
        <end position="544"/>
    </location>
</feature>
<accession>A9MUD9</accession>
<protein>
    <recommendedName>
        <fullName evidence="1">Potassium-transporting ATPase potassium-binding subunit</fullName>
    </recommendedName>
    <alternativeName>
        <fullName evidence="1">ATP phosphohydrolase [potassium-transporting] A chain</fullName>
    </alternativeName>
    <alternativeName>
        <fullName evidence="1">Potassium-binding and translocating subunit A</fullName>
    </alternativeName>
    <alternativeName>
        <fullName evidence="1">Potassium-translocating ATPase A chain</fullName>
    </alternativeName>
</protein>
<sequence>MAAQGFLLIASFLLILLVLAKPLGSGLARLIAAVPLPGVAGVERILWRTLGITDHEMNWRQYLLALLTLNLLGLGILFCLLFWQEWLPLNPQRLPGLSWDLALNTAVSFVTNTNWQAYSGESTLSYFSQMAGLTVQNFLSAATGIAVVFALIRAFTRQNVHTLGNAWQDLVRITLWILFPVALIIALFFIQQGVPQNLSAYQPITTLEGAKQLLPMGPVASQEAIKMLGTNGGGFFNANSSHPFENPTALTNLAQMLAIFLIPAALCFAFGEAAGDRRQGRALLWAMSFIFVVCVAVVMWAEVQGNPHLLAAGADSSVNMEGKETRFGVLASSLFAVVTTAASCGAVNAMHDSFTALGGMVPMWLMQIGEVVFGGVGSGLYGMLLFVLLAVFIAGLMIGRTPEYLGKKIDVREMKMTALAILVTPMLVLLGSALAMMTDAGRSAMLNPGPHGFSEVLYAVSSAANNNGSAFAGLSANSPFWNCLLAFCMFVGRFGVIIPVMAIAGSLVSKKVQPASQGTLATHGALFIGLLIGTVLLVGALTFIPALALGPVAEHFSLP</sequence>